<feature type="chain" id="PRO_0000241391" description="Large ribosomal subunit protein uL3">
    <location>
        <begin position="1"/>
        <end position="211"/>
    </location>
</feature>
<feature type="modified residue" description="N5-methylglutamine" evidence="1">
    <location>
        <position position="150"/>
    </location>
</feature>
<dbReference type="EMBL" id="CP000058">
    <property type="protein sequence ID" value="AAZ36228.1"/>
    <property type="molecule type" value="Genomic_DNA"/>
</dbReference>
<dbReference type="RefSeq" id="WP_011169629.1">
    <property type="nucleotide sequence ID" value="NC_005773.3"/>
</dbReference>
<dbReference type="SMR" id="Q48D36"/>
<dbReference type="KEGG" id="psp:PSPPH_4592"/>
<dbReference type="eggNOG" id="COG0087">
    <property type="taxonomic scope" value="Bacteria"/>
</dbReference>
<dbReference type="HOGENOM" id="CLU_044142_4_1_6"/>
<dbReference type="Proteomes" id="UP000000551">
    <property type="component" value="Chromosome"/>
</dbReference>
<dbReference type="GO" id="GO:0022625">
    <property type="term" value="C:cytosolic large ribosomal subunit"/>
    <property type="evidence" value="ECO:0007669"/>
    <property type="project" value="TreeGrafter"/>
</dbReference>
<dbReference type="GO" id="GO:0019843">
    <property type="term" value="F:rRNA binding"/>
    <property type="evidence" value="ECO:0007669"/>
    <property type="project" value="UniProtKB-UniRule"/>
</dbReference>
<dbReference type="GO" id="GO:0003735">
    <property type="term" value="F:structural constituent of ribosome"/>
    <property type="evidence" value="ECO:0007669"/>
    <property type="project" value="InterPro"/>
</dbReference>
<dbReference type="GO" id="GO:0006412">
    <property type="term" value="P:translation"/>
    <property type="evidence" value="ECO:0007669"/>
    <property type="project" value="UniProtKB-UniRule"/>
</dbReference>
<dbReference type="FunFam" id="2.40.30.10:FF:000004">
    <property type="entry name" value="50S ribosomal protein L3"/>
    <property type="match status" value="1"/>
</dbReference>
<dbReference type="FunFam" id="3.30.160.810:FF:000001">
    <property type="entry name" value="50S ribosomal protein L3"/>
    <property type="match status" value="1"/>
</dbReference>
<dbReference type="Gene3D" id="3.30.160.810">
    <property type="match status" value="1"/>
</dbReference>
<dbReference type="Gene3D" id="2.40.30.10">
    <property type="entry name" value="Translation factors"/>
    <property type="match status" value="1"/>
</dbReference>
<dbReference type="HAMAP" id="MF_01325_B">
    <property type="entry name" value="Ribosomal_uL3_B"/>
    <property type="match status" value="1"/>
</dbReference>
<dbReference type="InterPro" id="IPR000597">
    <property type="entry name" value="Ribosomal_uL3"/>
</dbReference>
<dbReference type="InterPro" id="IPR019927">
    <property type="entry name" value="Ribosomal_uL3_bac/org-type"/>
</dbReference>
<dbReference type="InterPro" id="IPR019926">
    <property type="entry name" value="Ribosomal_uL3_CS"/>
</dbReference>
<dbReference type="InterPro" id="IPR009000">
    <property type="entry name" value="Transl_B-barrel_sf"/>
</dbReference>
<dbReference type="NCBIfam" id="TIGR03625">
    <property type="entry name" value="L3_bact"/>
    <property type="match status" value="1"/>
</dbReference>
<dbReference type="PANTHER" id="PTHR11229">
    <property type="entry name" value="50S RIBOSOMAL PROTEIN L3"/>
    <property type="match status" value="1"/>
</dbReference>
<dbReference type="PANTHER" id="PTHR11229:SF16">
    <property type="entry name" value="LARGE RIBOSOMAL SUBUNIT PROTEIN UL3C"/>
    <property type="match status" value="1"/>
</dbReference>
<dbReference type="Pfam" id="PF00297">
    <property type="entry name" value="Ribosomal_L3"/>
    <property type="match status" value="1"/>
</dbReference>
<dbReference type="SUPFAM" id="SSF50447">
    <property type="entry name" value="Translation proteins"/>
    <property type="match status" value="1"/>
</dbReference>
<dbReference type="PROSITE" id="PS00474">
    <property type="entry name" value="RIBOSOMAL_L3"/>
    <property type="match status" value="1"/>
</dbReference>
<reference key="1">
    <citation type="journal article" date="2005" name="J. Bacteriol.">
        <title>Whole-genome sequence analysis of Pseudomonas syringae pv. phaseolicola 1448A reveals divergence among pathovars in genes involved in virulence and transposition.</title>
        <authorList>
            <person name="Joardar V."/>
            <person name="Lindeberg M."/>
            <person name="Jackson R.W."/>
            <person name="Selengut J."/>
            <person name="Dodson R."/>
            <person name="Brinkac L.M."/>
            <person name="Daugherty S.C."/>
            <person name="DeBoy R.T."/>
            <person name="Durkin A.S."/>
            <person name="Gwinn Giglio M."/>
            <person name="Madupu R."/>
            <person name="Nelson W.C."/>
            <person name="Rosovitz M.J."/>
            <person name="Sullivan S.A."/>
            <person name="Crabtree J."/>
            <person name="Creasy T."/>
            <person name="Davidsen T.M."/>
            <person name="Haft D.H."/>
            <person name="Zafar N."/>
            <person name="Zhou L."/>
            <person name="Halpin R."/>
            <person name="Holley T."/>
            <person name="Khouri H.M."/>
            <person name="Feldblyum T.V."/>
            <person name="White O."/>
            <person name="Fraser C.M."/>
            <person name="Chatterjee A.K."/>
            <person name="Cartinhour S."/>
            <person name="Schneider D."/>
            <person name="Mansfield J.W."/>
            <person name="Collmer A."/>
            <person name="Buell R."/>
        </authorList>
    </citation>
    <scope>NUCLEOTIDE SEQUENCE [LARGE SCALE GENOMIC DNA]</scope>
    <source>
        <strain>1448A / Race 6</strain>
    </source>
</reference>
<name>RL3_PSE14</name>
<gene>
    <name evidence="1" type="primary">rplC</name>
    <name type="ordered locus">PSPPH_4592</name>
</gene>
<organism>
    <name type="scientific">Pseudomonas savastanoi pv. phaseolicola (strain 1448A / Race 6)</name>
    <name type="common">Pseudomonas syringae pv. phaseolicola (strain 1448A / Race 6)</name>
    <dbReference type="NCBI Taxonomy" id="264730"/>
    <lineage>
        <taxon>Bacteria</taxon>
        <taxon>Pseudomonadati</taxon>
        <taxon>Pseudomonadota</taxon>
        <taxon>Gammaproteobacteria</taxon>
        <taxon>Pseudomonadales</taxon>
        <taxon>Pseudomonadaceae</taxon>
        <taxon>Pseudomonas</taxon>
    </lineage>
</organism>
<evidence type="ECO:0000255" key="1">
    <source>
        <dbReference type="HAMAP-Rule" id="MF_01325"/>
    </source>
</evidence>
<evidence type="ECO:0000305" key="2"/>
<keyword id="KW-0488">Methylation</keyword>
<keyword id="KW-0687">Ribonucleoprotein</keyword>
<keyword id="KW-0689">Ribosomal protein</keyword>
<keyword id="KW-0694">RNA-binding</keyword>
<keyword id="KW-0699">rRNA-binding</keyword>
<sequence>MTIGVVGRKCGMTRIFTEEGVSIPVTVIEIEPNRVTQFKTEETDGYRAVQVTVGERRASRVTAAQAGHFAKANVAAGRTVMEFRLEEGDYQAGDQINAEIFAAGQLVDVTGQSKGKGFQGTIKRWNFRGQDNTHGNSVSHRVPGSIGQCQTPGRVFKGKKMSGHMGAERVTVQSLELVRVDAERNLLLVKGAVPGATGGNLVVRPAAKARG</sequence>
<accession>Q48D36</accession>
<protein>
    <recommendedName>
        <fullName evidence="1">Large ribosomal subunit protein uL3</fullName>
    </recommendedName>
    <alternativeName>
        <fullName evidence="2">50S ribosomal protein L3</fullName>
    </alternativeName>
</protein>
<proteinExistence type="inferred from homology"/>
<comment type="function">
    <text evidence="1">One of the primary rRNA binding proteins, it binds directly near the 3'-end of the 23S rRNA, where it nucleates assembly of the 50S subunit.</text>
</comment>
<comment type="subunit">
    <text evidence="1">Part of the 50S ribosomal subunit. Forms a cluster with proteins L14 and L19.</text>
</comment>
<comment type="PTM">
    <text evidence="1">Methylated by PrmB.</text>
</comment>
<comment type="similarity">
    <text evidence="1">Belongs to the universal ribosomal protein uL3 family.</text>
</comment>